<organism>
    <name type="scientific">Methylococcus capsulatus (strain ATCC 33009 / NCIMB 11132 / Bath)</name>
    <dbReference type="NCBI Taxonomy" id="243233"/>
    <lineage>
        <taxon>Bacteria</taxon>
        <taxon>Pseudomonadati</taxon>
        <taxon>Pseudomonadota</taxon>
        <taxon>Gammaproteobacteria</taxon>
        <taxon>Methylococcales</taxon>
        <taxon>Methylococcaceae</taxon>
        <taxon>Methylococcus</taxon>
    </lineage>
</organism>
<gene>
    <name type="ordered locus">MCA1813</name>
</gene>
<sequence length="161" mass="17640">MEFTTAGLCDQFHGTHPLQIVEPLFRPFGAVSRFHGRITTLKVFEDSVLIRETLAQEVDGRVLVIDGGASHRCALLGGNLARLAADNGWQGIIVYGCVRDSVELGTVPIGIRALHTHPLDSHKRGGGDRDCLITFASVNFRTDHYLYADEDGIVVSEEKLI</sequence>
<accession>Q607E7</accession>
<reference key="1">
    <citation type="journal article" date="2004" name="PLoS Biol.">
        <title>Genomic insights into methanotrophy: the complete genome sequence of Methylococcus capsulatus (Bath).</title>
        <authorList>
            <person name="Ward N.L."/>
            <person name="Larsen O."/>
            <person name="Sakwa J."/>
            <person name="Bruseth L."/>
            <person name="Khouri H.M."/>
            <person name="Durkin A.S."/>
            <person name="Dimitrov G."/>
            <person name="Jiang L."/>
            <person name="Scanlan D."/>
            <person name="Kang K.H."/>
            <person name="Lewis M.R."/>
            <person name="Nelson K.E."/>
            <person name="Methe B.A."/>
            <person name="Wu M."/>
            <person name="Heidelberg J.F."/>
            <person name="Paulsen I.T."/>
            <person name="Fouts D.E."/>
            <person name="Ravel J."/>
            <person name="Tettelin H."/>
            <person name="Ren Q."/>
            <person name="Read T.D."/>
            <person name="DeBoy R.T."/>
            <person name="Seshadri R."/>
            <person name="Salzberg S.L."/>
            <person name="Jensen H.B."/>
            <person name="Birkeland N.K."/>
            <person name="Nelson W.C."/>
            <person name="Dodson R.J."/>
            <person name="Grindhaug S.H."/>
            <person name="Holt I.E."/>
            <person name="Eidhammer I."/>
            <person name="Jonasen I."/>
            <person name="Vanaken S."/>
            <person name="Utterback T.R."/>
            <person name="Feldblyum T.V."/>
            <person name="Fraser C.M."/>
            <person name="Lillehaug J.R."/>
            <person name="Eisen J.A."/>
        </authorList>
    </citation>
    <scope>NUCLEOTIDE SEQUENCE [LARGE SCALE GENOMIC DNA]</scope>
    <source>
        <strain>ATCC 33009 / NCIMB 11132 / Bath</strain>
    </source>
</reference>
<comment type="function">
    <text evidence="1">Catalyzes the aldol cleavage of 4-hydroxy-4-methyl-2-oxoglutarate (HMG) into 2 molecules of pyruvate. Also contains a secondary oxaloacetate (OAA) decarboxylase activity due to the common pyruvate enolate transition state formed following C-C bond cleavage in the retro-aldol and decarboxylation reactions (By similarity).</text>
</comment>
<comment type="catalytic activity">
    <reaction>
        <text>4-hydroxy-4-methyl-2-oxoglutarate = 2 pyruvate</text>
        <dbReference type="Rhea" id="RHEA:22748"/>
        <dbReference type="ChEBI" id="CHEBI:15361"/>
        <dbReference type="ChEBI" id="CHEBI:58276"/>
        <dbReference type="EC" id="4.1.3.17"/>
    </reaction>
</comment>
<comment type="catalytic activity">
    <reaction>
        <text>oxaloacetate + H(+) = pyruvate + CO2</text>
        <dbReference type="Rhea" id="RHEA:15641"/>
        <dbReference type="ChEBI" id="CHEBI:15361"/>
        <dbReference type="ChEBI" id="CHEBI:15378"/>
        <dbReference type="ChEBI" id="CHEBI:16452"/>
        <dbReference type="ChEBI" id="CHEBI:16526"/>
        <dbReference type="EC" id="4.1.1.112"/>
    </reaction>
</comment>
<comment type="cofactor">
    <cofactor evidence="1">
        <name>a divalent metal cation</name>
        <dbReference type="ChEBI" id="CHEBI:60240"/>
    </cofactor>
    <text evidence="1">Divalent metal cation.</text>
</comment>
<comment type="subunit">
    <text evidence="1">Homotrimer.</text>
</comment>
<comment type="similarity">
    <text evidence="2">Belongs to the class II aldolase/RraA-like family.</text>
</comment>
<proteinExistence type="inferred from homology"/>
<name>RRAAH_METCA</name>
<protein>
    <recommendedName>
        <fullName>Putative 4-hydroxy-4-methyl-2-oxoglutarate aldolase</fullName>
        <shortName>HMG aldolase</shortName>
        <ecNumber>4.1.3.17</ecNumber>
    </recommendedName>
    <alternativeName>
        <fullName>Oxaloacetate decarboxylase</fullName>
        <shortName>OAA decarboxylase</shortName>
        <ecNumber>4.1.1.112</ecNumber>
    </alternativeName>
    <alternativeName>
        <fullName>Regulator of ribonuclease activity homolog</fullName>
    </alternativeName>
    <alternativeName>
        <fullName>RraA-like protein</fullName>
    </alternativeName>
</protein>
<keyword id="KW-0456">Lyase</keyword>
<keyword id="KW-0479">Metal-binding</keyword>
<keyword id="KW-1185">Reference proteome</keyword>
<evidence type="ECO:0000250" key="1"/>
<evidence type="ECO:0000305" key="2"/>
<dbReference type="EC" id="4.1.3.17"/>
<dbReference type="EC" id="4.1.1.112"/>
<dbReference type="EMBL" id="AE017282">
    <property type="protein sequence ID" value="AAU92150.1"/>
    <property type="molecule type" value="Genomic_DNA"/>
</dbReference>
<dbReference type="RefSeq" id="WP_010961066.1">
    <property type="nucleotide sequence ID" value="NC_002977.6"/>
</dbReference>
<dbReference type="SMR" id="Q607E7"/>
<dbReference type="STRING" id="243233.MCA1813"/>
<dbReference type="GeneID" id="88224061"/>
<dbReference type="KEGG" id="mca:MCA1813"/>
<dbReference type="eggNOG" id="COG0684">
    <property type="taxonomic scope" value="Bacteria"/>
</dbReference>
<dbReference type="HOGENOM" id="CLU_072626_4_0_6"/>
<dbReference type="Proteomes" id="UP000006821">
    <property type="component" value="Chromosome"/>
</dbReference>
<dbReference type="GO" id="GO:0047443">
    <property type="term" value="F:4-hydroxy-4-methyl-2-oxoglutarate aldolase activity"/>
    <property type="evidence" value="ECO:0007669"/>
    <property type="project" value="UniProtKB-EC"/>
</dbReference>
<dbReference type="GO" id="GO:0046872">
    <property type="term" value="F:metal ion binding"/>
    <property type="evidence" value="ECO:0007669"/>
    <property type="project" value="UniProtKB-KW"/>
</dbReference>
<dbReference type="GO" id="GO:0008948">
    <property type="term" value="F:oxaloacetate decarboxylase activity"/>
    <property type="evidence" value="ECO:0007669"/>
    <property type="project" value="UniProtKB-EC"/>
</dbReference>
<dbReference type="GO" id="GO:0008428">
    <property type="term" value="F:ribonuclease inhibitor activity"/>
    <property type="evidence" value="ECO:0007669"/>
    <property type="project" value="InterPro"/>
</dbReference>
<dbReference type="GO" id="GO:0051252">
    <property type="term" value="P:regulation of RNA metabolic process"/>
    <property type="evidence" value="ECO:0007669"/>
    <property type="project" value="InterPro"/>
</dbReference>
<dbReference type="CDD" id="cd16841">
    <property type="entry name" value="RraA_family"/>
    <property type="match status" value="1"/>
</dbReference>
<dbReference type="Gene3D" id="3.50.30.40">
    <property type="entry name" value="Ribonuclease E inhibitor RraA/RraA-like"/>
    <property type="match status" value="1"/>
</dbReference>
<dbReference type="InterPro" id="IPR010203">
    <property type="entry name" value="RraA"/>
</dbReference>
<dbReference type="InterPro" id="IPR005493">
    <property type="entry name" value="RraA/RraA-like"/>
</dbReference>
<dbReference type="InterPro" id="IPR036704">
    <property type="entry name" value="RraA/RraA-like_sf"/>
</dbReference>
<dbReference type="NCBIfam" id="TIGR01935">
    <property type="entry name" value="NOT-MenG"/>
    <property type="match status" value="1"/>
</dbReference>
<dbReference type="NCBIfam" id="NF006875">
    <property type="entry name" value="PRK09372.1"/>
    <property type="match status" value="1"/>
</dbReference>
<dbReference type="PANTHER" id="PTHR33254">
    <property type="entry name" value="4-HYDROXY-4-METHYL-2-OXOGLUTARATE ALDOLASE 3-RELATED"/>
    <property type="match status" value="1"/>
</dbReference>
<dbReference type="PANTHER" id="PTHR33254:SF4">
    <property type="entry name" value="4-HYDROXY-4-METHYL-2-OXOGLUTARATE ALDOLASE 3-RELATED"/>
    <property type="match status" value="1"/>
</dbReference>
<dbReference type="Pfam" id="PF03737">
    <property type="entry name" value="RraA-like"/>
    <property type="match status" value="1"/>
</dbReference>
<dbReference type="SUPFAM" id="SSF89562">
    <property type="entry name" value="RraA-like"/>
    <property type="match status" value="1"/>
</dbReference>
<feature type="chain" id="PRO_0000209619" description="Putative 4-hydroxy-4-methyl-2-oxoglutarate aldolase">
    <location>
        <begin position="1"/>
        <end position="161"/>
    </location>
</feature>
<feature type="binding site" evidence="1">
    <location>
        <begin position="77"/>
        <end position="80"/>
    </location>
    <ligand>
        <name>substrate</name>
    </ligand>
</feature>
<feature type="binding site" evidence="1">
    <location>
        <position position="99"/>
    </location>
    <ligand>
        <name>substrate</name>
    </ligand>
</feature>
<feature type="binding site" evidence="1">
    <location>
        <position position="100"/>
    </location>
    <ligand>
        <name>a divalent metal cation</name>
        <dbReference type="ChEBI" id="CHEBI:60240"/>
    </ligand>
</feature>